<accession>Q3IJB4</accession>
<gene>
    <name evidence="1" type="primary">rpmE</name>
    <name type="ordered locus">PSHAa2726</name>
</gene>
<proteinExistence type="inferred from homology"/>
<name>RL31_PSET1</name>
<reference key="1">
    <citation type="journal article" date="2005" name="Genome Res.">
        <title>Coping with cold: the genome of the versatile marine Antarctica bacterium Pseudoalteromonas haloplanktis TAC125.</title>
        <authorList>
            <person name="Medigue C."/>
            <person name="Krin E."/>
            <person name="Pascal G."/>
            <person name="Barbe V."/>
            <person name="Bernsel A."/>
            <person name="Bertin P.N."/>
            <person name="Cheung F."/>
            <person name="Cruveiller S."/>
            <person name="D'Amico S."/>
            <person name="Duilio A."/>
            <person name="Fang G."/>
            <person name="Feller G."/>
            <person name="Ho C."/>
            <person name="Mangenot S."/>
            <person name="Marino G."/>
            <person name="Nilsson J."/>
            <person name="Parrilli E."/>
            <person name="Rocha E.P.C."/>
            <person name="Rouy Z."/>
            <person name="Sekowska A."/>
            <person name="Tutino M.L."/>
            <person name="Vallenet D."/>
            <person name="von Heijne G."/>
            <person name="Danchin A."/>
        </authorList>
    </citation>
    <scope>NUCLEOTIDE SEQUENCE [LARGE SCALE GENOMIC DNA]</scope>
    <source>
        <strain>TAC 125</strain>
    </source>
</reference>
<comment type="function">
    <text evidence="1">Binds the 23S rRNA.</text>
</comment>
<comment type="cofactor">
    <cofactor evidence="1">
        <name>Zn(2+)</name>
        <dbReference type="ChEBI" id="CHEBI:29105"/>
    </cofactor>
    <text evidence="1">Binds 1 zinc ion per subunit.</text>
</comment>
<comment type="subunit">
    <text evidence="1">Part of the 50S ribosomal subunit.</text>
</comment>
<comment type="similarity">
    <text evidence="1">Belongs to the bacterial ribosomal protein bL31 family. Type A subfamily.</text>
</comment>
<sequence>MKEGIHPKYEVISATCSCGNEFETSSTLCKNIHLDVCSACHPFYTGKQKILDTGGRVDRFNKRFGALGSKK</sequence>
<protein>
    <recommendedName>
        <fullName evidence="1">Large ribosomal subunit protein bL31</fullName>
    </recommendedName>
    <alternativeName>
        <fullName evidence="2">50S ribosomal protein L31</fullName>
    </alternativeName>
</protein>
<keyword id="KW-0479">Metal-binding</keyword>
<keyword id="KW-1185">Reference proteome</keyword>
<keyword id="KW-0687">Ribonucleoprotein</keyword>
<keyword id="KW-0689">Ribosomal protein</keyword>
<keyword id="KW-0694">RNA-binding</keyword>
<keyword id="KW-0699">rRNA-binding</keyword>
<keyword id="KW-0862">Zinc</keyword>
<organism>
    <name type="scientific">Pseudoalteromonas translucida (strain TAC 125)</name>
    <dbReference type="NCBI Taxonomy" id="326442"/>
    <lineage>
        <taxon>Bacteria</taxon>
        <taxon>Pseudomonadati</taxon>
        <taxon>Pseudomonadota</taxon>
        <taxon>Gammaproteobacteria</taxon>
        <taxon>Alteromonadales</taxon>
        <taxon>Pseudoalteromonadaceae</taxon>
        <taxon>Pseudoalteromonas</taxon>
    </lineage>
</organism>
<dbReference type="EMBL" id="CR954246">
    <property type="protein sequence ID" value="CAI87774.1"/>
    <property type="molecule type" value="Genomic_DNA"/>
</dbReference>
<dbReference type="SMR" id="Q3IJB4"/>
<dbReference type="STRING" id="326442.PSHAa2726"/>
<dbReference type="KEGG" id="pha:PSHAa2726"/>
<dbReference type="eggNOG" id="COG0254">
    <property type="taxonomic scope" value="Bacteria"/>
</dbReference>
<dbReference type="HOGENOM" id="CLU_114306_4_0_6"/>
<dbReference type="BioCyc" id="PHAL326442:PSHA_RS17695-MONOMER"/>
<dbReference type="Proteomes" id="UP000006843">
    <property type="component" value="Chromosome I"/>
</dbReference>
<dbReference type="GO" id="GO:1990904">
    <property type="term" value="C:ribonucleoprotein complex"/>
    <property type="evidence" value="ECO:0007669"/>
    <property type="project" value="UniProtKB-KW"/>
</dbReference>
<dbReference type="GO" id="GO:0005840">
    <property type="term" value="C:ribosome"/>
    <property type="evidence" value="ECO:0007669"/>
    <property type="project" value="UniProtKB-KW"/>
</dbReference>
<dbReference type="GO" id="GO:0046872">
    <property type="term" value="F:metal ion binding"/>
    <property type="evidence" value="ECO:0007669"/>
    <property type="project" value="UniProtKB-KW"/>
</dbReference>
<dbReference type="GO" id="GO:0019843">
    <property type="term" value="F:rRNA binding"/>
    <property type="evidence" value="ECO:0007669"/>
    <property type="project" value="UniProtKB-KW"/>
</dbReference>
<dbReference type="GO" id="GO:0003735">
    <property type="term" value="F:structural constituent of ribosome"/>
    <property type="evidence" value="ECO:0007669"/>
    <property type="project" value="InterPro"/>
</dbReference>
<dbReference type="GO" id="GO:0006412">
    <property type="term" value="P:translation"/>
    <property type="evidence" value="ECO:0007669"/>
    <property type="project" value="UniProtKB-UniRule"/>
</dbReference>
<dbReference type="Gene3D" id="4.10.830.30">
    <property type="entry name" value="Ribosomal protein L31"/>
    <property type="match status" value="1"/>
</dbReference>
<dbReference type="HAMAP" id="MF_00501">
    <property type="entry name" value="Ribosomal_bL31_1"/>
    <property type="match status" value="1"/>
</dbReference>
<dbReference type="InterPro" id="IPR034704">
    <property type="entry name" value="Ribosomal_bL28/bL31-like_sf"/>
</dbReference>
<dbReference type="InterPro" id="IPR002150">
    <property type="entry name" value="Ribosomal_bL31"/>
</dbReference>
<dbReference type="InterPro" id="IPR027491">
    <property type="entry name" value="Ribosomal_bL31_A"/>
</dbReference>
<dbReference type="InterPro" id="IPR042105">
    <property type="entry name" value="Ribosomal_bL31_sf"/>
</dbReference>
<dbReference type="NCBIfam" id="TIGR00105">
    <property type="entry name" value="L31"/>
    <property type="match status" value="1"/>
</dbReference>
<dbReference type="NCBIfam" id="NF000612">
    <property type="entry name" value="PRK00019.1"/>
    <property type="match status" value="1"/>
</dbReference>
<dbReference type="NCBIfam" id="NF001809">
    <property type="entry name" value="PRK00528.1"/>
    <property type="match status" value="1"/>
</dbReference>
<dbReference type="PANTHER" id="PTHR33280">
    <property type="entry name" value="50S RIBOSOMAL PROTEIN L31, CHLOROPLASTIC"/>
    <property type="match status" value="1"/>
</dbReference>
<dbReference type="PANTHER" id="PTHR33280:SF6">
    <property type="entry name" value="LARGE RIBOSOMAL SUBUNIT PROTEIN BL31A"/>
    <property type="match status" value="1"/>
</dbReference>
<dbReference type="Pfam" id="PF01197">
    <property type="entry name" value="Ribosomal_L31"/>
    <property type="match status" value="1"/>
</dbReference>
<dbReference type="PRINTS" id="PR01249">
    <property type="entry name" value="RIBOSOMALL31"/>
</dbReference>
<dbReference type="SUPFAM" id="SSF143800">
    <property type="entry name" value="L28p-like"/>
    <property type="match status" value="1"/>
</dbReference>
<dbReference type="PROSITE" id="PS01143">
    <property type="entry name" value="RIBOSOMAL_L31"/>
    <property type="match status" value="1"/>
</dbReference>
<feature type="chain" id="PRO_0000259209" description="Large ribosomal subunit protein bL31">
    <location>
        <begin position="1"/>
        <end position="71"/>
    </location>
</feature>
<feature type="binding site" evidence="1">
    <location>
        <position position="16"/>
    </location>
    <ligand>
        <name>Zn(2+)</name>
        <dbReference type="ChEBI" id="CHEBI:29105"/>
    </ligand>
</feature>
<feature type="binding site" evidence="1">
    <location>
        <position position="18"/>
    </location>
    <ligand>
        <name>Zn(2+)</name>
        <dbReference type="ChEBI" id="CHEBI:29105"/>
    </ligand>
</feature>
<feature type="binding site" evidence="1">
    <location>
        <position position="37"/>
    </location>
    <ligand>
        <name>Zn(2+)</name>
        <dbReference type="ChEBI" id="CHEBI:29105"/>
    </ligand>
</feature>
<feature type="binding site" evidence="1">
    <location>
        <position position="40"/>
    </location>
    <ligand>
        <name>Zn(2+)</name>
        <dbReference type="ChEBI" id="CHEBI:29105"/>
    </ligand>
</feature>
<evidence type="ECO:0000255" key="1">
    <source>
        <dbReference type="HAMAP-Rule" id="MF_00501"/>
    </source>
</evidence>
<evidence type="ECO:0000305" key="2"/>